<organism>
    <name type="scientific">Homo sapiens</name>
    <name type="common">Human</name>
    <dbReference type="NCBI Taxonomy" id="9606"/>
    <lineage>
        <taxon>Eukaryota</taxon>
        <taxon>Metazoa</taxon>
        <taxon>Chordata</taxon>
        <taxon>Craniata</taxon>
        <taxon>Vertebrata</taxon>
        <taxon>Euteleostomi</taxon>
        <taxon>Mammalia</taxon>
        <taxon>Eutheria</taxon>
        <taxon>Euarchontoglires</taxon>
        <taxon>Primates</taxon>
        <taxon>Haplorrhini</taxon>
        <taxon>Catarrhini</taxon>
        <taxon>Hominidae</taxon>
        <taxon>Homo</taxon>
    </lineage>
</organism>
<sequence length="360" mass="41143">MEELSQALASSFSVSQDLNSTAAPHPRLSQYKSKYSSLEQSERRRRLLELQKSKRLDYVNHARRLAEDDWTGMESEEENKKDDEEMDIDTVKKLPKHYANQLMLSEWLIDVPSDLGQEWIVVVCPVGKRALIVASRGSTSAYTKSGYCVNRFSSLLPGGNRRNSTAKDYTILDCIYNEVNQTYYVLDVMCWRGHPFYDCQTDFRFYWMHSKLPEEEGLGEKTKLNPFKFVGLKNFPCTPESLCDVLSMDFPFEVDGLLFYHKQTHYSPGSTPLVGWLRPYMVSDVLGVAVPAGPLTTKPDYAGHQLQQIMEHKKSQKEGMKEKLTHKASENGHYELEHLSTPKLKGSSHSPDHPGCLMEN</sequence>
<name>SPN1_HUMAN</name>
<gene>
    <name type="primary">SNUPN</name>
    <name type="synonym">RNUT1</name>
    <name type="synonym">SPN1</name>
</gene>
<proteinExistence type="evidence at protein level"/>
<evidence type="ECO:0000255" key="1">
    <source>
        <dbReference type="PROSITE-ProRule" id="PRU00561"/>
    </source>
</evidence>
<evidence type="ECO:0000256" key="2">
    <source>
        <dbReference type="SAM" id="MobiDB-lite"/>
    </source>
</evidence>
<evidence type="ECO:0000269" key="3">
    <source>
    </source>
</evidence>
<evidence type="ECO:0000269" key="4">
    <source>
    </source>
</evidence>
<evidence type="ECO:0000269" key="5">
    <source>
    </source>
</evidence>
<evidence type="ECO:0000269" key="6">
    <source>
    </source>
</evidence>
<evidence type="ECO:0000269" key="7">
    <source>
    </source>
</evidence>
<evidence type="ECO:0000269" key="8">
    <source>
    </source>
</evidence>
<evidence type="ECO:0000269" key="9">
    <source>
    </source>
</evidence>
<evidence type="ECO:0000269" key="10">
    <source>
    </source>
</evidence>
<evidence type="ECO:0000269" key="11">
    <source>
    </source>
</evidence>
<evidence type="ECO:0000305" key="12"/>
<evidence type="ECO:0000305" key="13">
    <source>
    </source>
</evidence>
<evidence type="ECO:0007744" key="14">
    <source>
        <dbReference type="PDB" id="1XK5"/>
    </source>
</evidence>
<evidence type="ECO:0007744" key="15">
    <source>
    </source>
</evidence>
<evidence type="ECO:0007744" key="16">
    <source>
    </source>
</evidence>
<evidence type="ECO:0007744" key="17">
    <source>
    </source>
</evidence>
<evidence type="ECO:0007829" key="18">
    <source>
        <dbReference type="PDB" id="1XK5"/>
    </source>
</evidence>
<evidence type="ECO:0007829" key="19">
    <source>
        <dbReference type="PDB" id="2P8Q"/>
    </source>
</evidence>
<evidence type="ECO:0007829" key="20">
    <source>
        <dbReference type="PDB" id="3GJX"/>
    </source>
</evidence>
<evidence type="ECO:0007829" key="21">
    <source>
        <dbReference type="PDB" id="3NBY"/>
    </source>
</evidence>
<evidence type="ECO:0007829" key="22">
    <source>
        <dbReference type="PDB" id="3NBZ"/>
    </source>
</evidence>
<evidence type="ECO:0007829" key="23">
    <source>
        <dbReference type="PDB" id="5DIS"/>
    </source>
</evidence>
<comment type="function">
    <text evidence="3 5 6 10 11">Functions as an U snRNP-specific nuclear import adapter. Involved in the trimethylguanosine (m3G)-cap-dependent nuclear import of U snRNPs. Binds specifically to the terminal m3G-cap U snRNAs.</text>
</comment>
<comment type="subunit">
    <text evidence="3 4 5 6 7 8 10 11">Component of an import snRNP complex composed of KPNB1, SNUPN, SMN1 and ZNF259. Component of a nuclear export receptor complex composed of KPNB1, Ran, SNUPN and XPO1. Found in a trimeric export complex with SNUPN, Ran and XPO1. Interacts (via IBB domain) with KPNB1; the interaction is direct. Interacts with DDX20, IPO7, SMN1, SNRPB and XPO1. Interacts directly with XPO1. Its interaction with XPO1 and binding to m3G-cap U snRNPs appears to be mutually exclusive. Can form homomers (PubMed:38413582).</text>
</comment>
<comment type="interaction">
    <interactant intactId="EBI-714033">
        <id>O95149</id>
    </interactant>
    <interactant intactId="EBI-355867">
        <id>O14980</id>
        <label>XPO1</label>
    </interactant>
    <organismsDiffer>false</organismsDiffer>
    <experiments>8</experiments>
</comment>
<comment type="interaction">
    <interactant intactId="EBI-714033">
        <id>O95149</id>
    </interactant>
    <interactant intactId="EBI-2550236">
        <id>Q6P5F9</id>
        <label>Xpo1</label>
    </interactant>
    <organismsDiffer>true</organismsDiffer>
    <experiments>2</experiments>
</comment>
<comment type="subcellular location">
    <subcellularLocation>
        <location evidence="3 5 10">Nucleus</location>
    </subcellularLocation>
    <subcellularLocation>
        <location evidence="4 10 11 13">Cytoplasm</location>
    </subcellularLocation>
    <text evidence="3 4">Nucleoplasmic shuttling protein. Its nuclear import involves the nucleocytoplasmic transport receptor importin beta (PubMed:10209022, PubMed:12095920). It is re-exported to the cytoplasm by the XPO1-dependent nuclear export receptor pathway (PubMed:10209022).</text>
</comment>
<comment type="disease" evidence="9 10">
    <disease id="DI-06918">
        <name>Muscular dystrophy, limb-girdle, autosomal recessive 29</name>
        <acronym>LGMDR29</acronym>
        <description>An autosomal recessive form of limb girdle muscular dystrophy, a group of genetically heterogeneous muscular disorders that share proximal muscle weakness as the major attribute. Most limb girdle muscular dystrophies present with elevated creatinine kinase and myopathic electromyographic features. Disease is usually progressive to a variable degree, ranging from minor disability to complete inability to ambulate, and can involve the large proximal muscles, as well as axial and facial muscles. Different disease forms may exhibit skeletal muscle hypertrophy, kyphoscoliosis, and contractures or involve other muscle groups and manifest with distal weakness, cardiomyopathy, dysphagia, and respiratory difficulties. LGMDR29 is characterized by muscle weakness predominantly affecting the proximal lower limbs, although upper limb involvement also occurs. Additional features include joint contractures, spinal abnormalities, and significant restrictive ventilatory dysfunction. In rare cases, central nervous system involvement has been reported, including cataracts, developmental delay, and brain imaging abnormalities.</description>
        <dbReference type="MIM" id="620793"/>
    </disease>
    <text>The disease is caused by variants affecting the gene represented in this entry.</text>
</comment>
<comment type="similarity">
    <text evidence="12">Belongs to the snurportin family.</text>
</comment>
<reference key="1">
    <citation type="journal article" date="1998" name="EMBO J.">
        <title>Snurportin1, an m3G-cap-specific nuclear import receptor with a novel domain structure.</title>
        <authorList>
            <person name="Huber J."/>
            <person name="Cronshagen U."/>
            <person name="Kadokura M."/>
            <person name="Marshallsay C."/>
            <person name="Wada T."/>
            <person name="Sekine M."/>
            <person name="Luehrmann R."/>
        </authorList>
    </citation>
    <scope>NUCLEOTIDE SEQUENCE [MRNA]</scope>
    <scope>PROTEIN SEQUENCE OF 34-52; 54-69; 128-144; 211-221 AND 323-327</scope>
    <scope>FUNCTION IN U SNRNP NUCLEAR IMPORT</scope>
    <scope>INTERACTION WITH KPNB1</scope>
    <scope>RNA-BINDING</scope>
    <scope>SUBCELLULAR LOCATION</scope>
    <source>
        <tissue>Brain</tissue>
    </source>
</reference>
<reference key="2">
    <citation type="submission" date="2004-06" db="EMBL/GenBank/DDBJ databases">
        <title>Cloning of human full open reading frames in Gateway(TM) system entry vector (pDONR201).</title>
        <authorList>
            <person name="Ebert L."/>
            <person name="Schick M."/>
            <person name="Neubert P."/>
            <person name="Schatten R."/>
            <person name="Henze S."/>
            <person name="Korn B."/>
        </authorList>
    </citation>
    <scope>NUCLEOTIDE SEQUENCE [LARGE SCALE MRNA]</scope>
</reference>
<reference key="3">
    <citation type="journal article" date="2004" name="Nat. Genet.">
        <title>Complete sequencing and characterization of 21,243 full-length human cDNAs.</title>
        <authorList>
            <person name="Ota T."/>
            <person name="Suzuki Y."/>
            <person name="Nishikawa T."/>
            <person name="Otsuki T."/>
            <person name="Sugiyama T."/>
            <person name="Irie R."/>
            <person name="Wakamatsu A."/>
            <person name="Hayashi K."/>
            <person name="Sato H."/>
            <person name="Nagai K."/>
            <person name="Kimura K."/>
            <person name="Makita H."/>
            <person name="Sekine M."/>
            <person name="Obayashi M."/>
            <person name="Nishi T."/>
            <person name="Shibahara T."/>
            <person name="Tanaka T."/>
            <person name="Ishii S."/>
            <person name="Yamamoto J."/>
            <person name="Saito K."/>
            <person name="Kawai Y."/>
            <person name="Isono Y."/>
            <person name="Nakamura Y."/>
            <person name="Nagahari K."/>
            <person name="Murakami K."/>
            <person name="Yasuda T."/>
            <person name="Iwayanagi T."/>
            <person name="Wagatsuma M."/>
            <person name="Shiratori A."/>
            <person name="Sudo H."/>
            <person name="Hosoiri T."/>
            <person name="Kaku Y."/>
            <person name="Kodaira H."/>
            <person name="Kondo H."/>
            <person name="Sugawara M."/>
            <person name="Takahashi M."/>
            <person name="Kanda K."/>
            <person name="Yokoi T."/>
            <person name="Furuya T."/>
            <person name="Kikkawa E."/>
            <person name="Omura Y."/>
            <person name="Abe K."/>
            <person name="Kamihara K."/>
            <person name="Katsuta N."/>
            <person name="Sato K."/>
            <person name="Tanikawa M."/>
            <person name="Yamazaki M."/>
            <person name="Ninomiya K."/>
            <person name="Ishibashi T."/>
            <person name="Yamashita H."/>
            <person name="Murakawa K."/>
            <person name="Fujimori K."/>
            <person name="Tanai H."/>
            <person name="Kimata M."/>
            <person name="Watanabe M."/>
            <person name="Hiraoka S."/>
            <person name="Chiba Y."/>
            <person name="Ishida S."/>
            <person name="Ono Y."/>
            <person name="Takiguchi S."/>
            <person name="Watanabe S."/>
            <person name="Yosida M."/>
            <person name="Hotuta T."/>
            <person name="Kusano J."/>
            <person name="Kanehori K."/>
            <person name="Takahashi-Fujii A."/>
            <person name="Hara H."/>
            <person name="Tanase T.-O."/>
            <person name="Nomura Y."/>
            <person name="Togiya S."/>
            <person name="Komai F."/>
            <person name="Hara R."/>
            <person name="Takeuchi K."/>
            <person name="Arita M."/>
            <person name="Imose N."/>
            <person name="Musashino K."/>
            <person name="Yuuki H."/>
            <person name="Oshima A."/>
            <person name="Sasaki N."/>
            <person name="Aotsuka S."/>
            <person name="Yoshikawa Y."/>
            <person name="Matsunawa H."/>
            <person name="Ichihara T."/>
            <person name="Shiohata N."/>
            <person name="Sano S."/>
            <person name="Moriya S."/>
            <person name="Momiyama H."/>
            <person name="Satoh N."/>
            <person name="Takami S."/>
            <person name="Terashima Y."/>
            <person name="Suzuki O."/>
            <person name="Nakagawa S."/>
            <person name="Senoh A."/>
            <person name="Mizoguchi H."/>
            <person name="Goto Y."/>
            <person name="Shimizu F."/>
            <person name="Wakebe H."/>
            <person name="Hishigaki H."/>
            <person name="Watanabe T."/>
            <person name="Sugiyama A."/>
            <person name="Takemoto M."/>
            <person name="Kawakami B."/>
            <person name="Yamazaki M."/>
            <person name="Watanabe K."/>
            <person name="Kumagai A."/>
            <person name="Itakura S."/>
            <person name="Fukuzumi Y."/>
            <person name="Fujimori Y."/>
            <person name="Komiyama M."/>
            <person name="Tashiro H."/>
            <person name="Tanigami A."/>
            <person name="Fujiwara T."/>
            <person name="Ono T."/>
            <person name="Yamada K."/>
            <person name="Fujii Y."/>
            <person name="Ozaki K."/>
            <person name="Hirao M."/>
            <person name="Ohmori Y."/>
            <person name="Kawabata A."/>
            <person name="Hikiji T."/>
            <person name="Kobatake N."/>
            <person name="Inagaki H."/>
            <person name="Ikema Y."/>
            <person name="Okamoto S."/>
            <person name="Okitani R."/>
            <person name="Kawakami T."/>
            <person name="Noguchi S."/>
            <person name="Itoh T."/>
            <person name="Shigeta K."/>
            <person name="Senba T."/>
            <person name="Matsumura K."/>
            <person name="Nakajima Y."/>
            <person name="Mizuno T."/>
            <person name="Morinaga M."/>
            <person name="Sasaki M."/>
            <person name="Togashi T."/>
            <person name="Oyama M."/>
            <person name="Hata H."/>
            <person name="Watanabe M."/>
            <person name="Komatsu T."/>
            <person name="Mizushima-Sugano J."/>
            <person name="Satoh T."/>
            <person name="Shirai Y."/>
            <person name="Takahashi Y."/>
            <person name="Nakagawa K."/>
            <person name="Okumura K."/>
            <person name="Nagase T."/>
            <person name="Nomura N."/>
            <person name="Kikuchi H."/>
            <person name="Masuho Y."/>
            <person name="Yamashita R."/>
            <person name="Nakai K."/>
            <person name="Yada T."/>
            <person name="Nakamura Y."/>
            <person name="Ohara O."/>
            <person name="Isogai T."/>
            <person name="Sugano S."/>
        </authorList>
    </citation>
    <scope>NUCLEOTIDE SEQUENCE [LARGE SCALE MRNA]</scope>
    <source>
        <tissue>Cerebellum</tissue>
    </source>
</reference>
<reference key="4">
    <citation type="submission" date="2005-09" db="EMBL/GenBank/DDBJ databases">
        <authorList>
            <person name="Mural R.J."/>
            <person name="Istrail S."/>
            <person name="Sutton G.G."/>
            <person name="Florea L."/>
            <person name="Halpern A.L."/>
            <person name="Mobarry C.M."/>
            <person name="Lippert R."/>
            <person name="Walenz B."/>
            <person name="Shatkay H."/>
            <person name="Dew I."/>
            <person name="Miller J.R."/>
            <person name="Flanigan M.J."/>
            <person name="Edwards N.J."/>
            <person name="Bolanos R."/>
            <person name="Fasulo D."/>
            <person name="Halldorsson B.V."/>
            <person name="Hannenhalli S."/>
            <person name="Turner R."/>
            <person name="Yooseph S."/>
            <person name="Lu F."/>
            <person name="Nusskern D.R."/>
            <person name="Shue B.C."/>
            <person name="Zheng X.H."/>
            <person name="Zhong F."/>
            <person name="Delcher A.L."/>
            <person name="Huson D.H."/>
            <person name="Kravitz S.A."/>
            <person name="Mouchard L."/>
            <person name="Reinert K."/>
            <person name="Remington K.A."/>
            <person name="Clark A.G."/>
            <person name="Waterman M.S."/>
            <person name="Eichler E.E."/>
            <person name="Adams M.D."/>
            <person name="Hunkapiller M.W."/>
            <person name="Myers E.W."/>
            <person name="Venter J.C."/>
        </authorList>
    </citation>
    <scope>NUCLEOTIDE SEQUENCE [LARGE SCALE GENOMIC DNA]</scope>
</reference>
<reference key="5">
    <citation type="journal article" date="2004" name="Genome Res.">
        <title>The status, quality, and expansion of the NIH full-length cDNA project: the Mammalian Gene Collection (MGC).</title>
        <authorList>
            <consortium name="The MGC Project Team"/>
        </authorList>
    </citation>
    <scope>NUCLEOTIDE SEQUENCE [LARGE SCALE MRNA]</scope>
    <source>
        <tissue>Uterus</tissue>
    </source>
</reference>
<reference key="6">
    <citation type="journal article" date="1999" name="J. Cell Biol.">
        <title>CRM1-mediated recycling of snurportin 1 to the cytoplasm.</title>
        <authorList>
            <person name="Paraskeva E."/>
            <person name="Izaurralde E."/>
            <person name="Bischoff F.R."/>
            <person name="Huber J."/>
            <person name="Kutay U."/>
            <person name="Hartmann E."/>
            <person name="Luehrmann R."/>
            <person name="Goerlich D."/>
        </authorList>
    </citation>
    <scope>FUNCTION</scope>
    <scope>IDENTIFICATION IN A NUCLEAR EXPORT RECEPTOR COMPLEX</scope>
    <scope>INTERACTION WITH IPO7; KPNB1 AND XPO1</scope>
    <scope>IDENTIFICATION IN A TRIMERIC EXPORT COMPLEX WITH XPO1 AND RAN</scope>
    <scope>SUBCELLULAR LOCATION</scope>
</reference>
<reference key="7">
    <citation type="journal article" date="2002" name="Hum. Mol. Genet.">
        <title>SMN, the spinal muscular atrophy protein, forms a pre-import snRNP complex with snurportin1 and importin beta.</title>
        <authorList>
            <person name="Narayanan U."/>
            <person name="Ospina J.K."/>
            <person name="Frey M.R."/>
            <person name="Hebert M.D."/>
            <person name="Matera A.G."/>
        </authorList>
    </citation>
    <scope>IDENTIFICATION IN AN IMPORT SNRNP COMPLEX</scope>
    <scope>INTERACTION WITH DDX20; SMN1 AND SNRPB</scope>
    <scope>SUBCELLULAR LOCATION</scope>
</reference>
<reference key="8">
    <citation type="journal article" date="2005" name="Mol. Biol. Cell">
        <title>Cross-talk between snurportin1 subdomains.</title>
        <authorList>
            <person name="Ospina J.K."/>
            <person name="Gonsalvez G.B."/>
            <person name="Bednenko J."/>
            <person name="Darzynkiewicz E."/>
            <person name="Gerace L."/>
            <person name="Matera A.G."/>
        </authorList>
    </citation>
    <scope>FUNCTION</scope>
    <scope>SUBUNIT</scope>
    <scope>MUTAGENESIS OF ARG-27; TRP-107; 203-PHE--TRP-207 AND TRP-276</scope>
    <scope>RNA-BINDING</scope>
</reference>
<reference key="9">
    <citation type="journal article" date="2008" name="Proc. Natl. Acad. Sci. U.S.A.">
        <title>A quantitative atlas of mitotic phosphorylation.</title>
        <authorList>
            <person name="Dephoure N."/>
            <person name="Zhou C."/>
            <person name="Villen J."/>
            <person name="Beausoleil S.A."/>
            <person name="Bakalarski C.E."/>
            <person name="Elledge S.J."/>
            <person name="Gygi S.P."/>
        </authorList>
    </citation>
    <scope>IDENTIFICATION BY MASS SPECTROMETRY [LARGE SCALE ANALYSIS]</scope>
    <source>
        <tissue>Cervix carcinoma</tissue>
    </source>
</reference>
<reference key="10">
    <citation type="journal article" date="2010" name="Sci. Signal.">
        <title>Quantitative phosphoproteomics reveals widespread full phosphorylation site occupancy during mitosis.</title>
        <authorList>
            <person name="Olsen J.V."/>
            <person name="Vermeulen M."/>
            <person name="Santamaria A."/>
            <person name="Kumar C."/>
            <person name="Miller M.L."/>
            <person name="Jensen L.J."/>
            <person name="Gnad F."/>
            <person name="Cox J."/>
            <person name="Jensen T.S."/>
            <person name="Nigg E.A."/>
            <person name="Brunak S."/>
            <person name="Mann M."/>
        </authorList>
    </citation>
    <scope>ACETYLATION [LARGE SCALE ANALYSIS] AT MET-1</scope>
    <scope>IDENTIFICATION BY MASS SPECTROMETRY [LARGE SCALE ANALYSIS]</scope>
    <source>
        <tissue>Cervix carcinoma</tissue>
    </source>
</reference>
<reference key="11">
    <citation type="journal article" date="2011" name="BMC Syst. Biol.">
        <title>Initial characterization of the human central proteome.</title>
        <authorList>
            <person name="Burkard T.R."/>
            <person name="Planyavsky M."/>
            <person name="Kaupe I."/>
            <person name="Breitwieser F.P."/>
            <person name="Buerckstuemmer T."/>
            <person name="Bennett K.L."/>
            <person name="Superti-Furga G."/>
            <person name="Colinge J."/>
        </authorList>
    </citation>
    <scope>IDENTIFICATION BY MASS SPECTROMETRY [LARGE SCALE ANALYSIS]</scope>
</reference>
<reference key="12">
    <citation type="journal article" date="2011" name="Sci. Signal.">
        <title>System-wide temporal characterization of the proteome and phosphoproteome of human embryonic stem cell differentiation.</title>
        <authorList>
            <person name="Rigbolt K.T."/>
            <person name="Prokhorova T.A."/>
            <person name="Akimov V."/>
            <person name="Henningsen J."/>
            <person name="Johansen P.T."/>
            <person name="Kratchmarova I."/>
            <person name="Kassem M."/>
            <person name="Mann M."/>
            <person name="Olsen J.V."/>
            <person name="Blagoev B."/>
        </authorList>
    </citation>
    <scope>PHOSPHORYLATION [LARGE SCALE ANALYSIS] AT SER-75</scope>
    <scope>IDENTIFICATION BY MASS SPECTROMETRY [LARGE SCALE ANALYSIS]</scope>
</reference>
<reference key="13">
    <citation type="journal article" date="2013" name="J. Proteome Res.">
        <title>Toward a comprehensive characterization of a human cancer cell phosphoproteome.</title>
        <authorList>
            <person name="Zhou H."/>
            <person name="Di Palma S."/>
            <person name="Preisinger C."/>
            <person name="Peng M."/>
            <person name="Polat A.N."/>
            <person name="Heck A.J."/>
            <person name="Mohammed S."/>
        </authorList>
    </citation>
    <scope>PHOSPHORYLATION [LARGE SCALE ANALYSIS] AT SER-350</scope>
    <scope>IDENTIFICATION BY MASS SPECTROMETRY [LARGE SCALE ANALYSIS]</scope>
    <source>
        <tissue>Cervix carcinoma</tissue>
        <tissue>Erythroleukemia</tissue>
    </source>
</reference>
<reference key="14">
    <citation type="journal article" date="2005" name="EMBO J.">
        <title>Structural basis for m3G-cap-mediated nuclear import of spliceosomal UsnRNPs by snurportin1.</title>
        <authorList>
            <person name="Strasser A."/>
            <person name="Dickmanns A."/>
            <person name="Luehrmann R."/>
            <person name="Ficner R."/>
        </authorList>
    </citation>
    <scope>X-RAY CRYSTALLOGRAPHY (2.4 ANGSTROMS) OF 97-300 IN COMPLEX WITH M3G-CAP</scope>
    <scope>MUTAGENESIS OF TRP-107 AND TRP-276</scope>
    <scope>FUNCTION</scope>
    <scope>SUBCELLULAR LOCATION</scope>
</reference>
<reference key="15">
    <citation type="journal article" date="2008" name="J. Biol. Chem.">
        <title>Molecular basis for the recognition of snurportin 1 by importin beta.</title>
        <authorList>
            <person name="Mitrousis G."/>
            <person name="Olia A.S."/>
            <person name="Walker-Kopp N."/>
            <person name="Cingolani G."/>
        </authorList>
    </citation>
    <scope>X-RAY CRYSTALLOGRAPHY (2.35 ANGSTROMS) OF 25-64 IN COMPLEX WITH KPNB1</scope>
    <scope>INTERACTION WITH KPNB1</scope>
</reference>
<reference key="16">
    <citation type="journal article" date="2010" name="Biochemistry">
        <title>Conformational selection in the recognition of the snurportin importin beta binding domain by importin beta.</title>
        <authorList>
            <person name="Bhardwaj A."/>
            <person name="Cingolani G."/>
        </authorList>
    </citation>
    <scope>X-RAY CRYSTALLOGRAPHY (3.15 ANGSTROMS) OF 25-64 IN COMPLEX WITH KPNB1</scope>
    <scope>INTERACTION WITH KPNB1</scope>
</reference>
<reference key="17">
    <citation type="journal article" date="2024" name="Brain">
        <title>Biallelic variants in SNUPN cause a limb girdle muscular dystrophy with myofibrillar-like features.</title>
        <authorList>
            <person name="Iruzubieta P."/>
            <person name="Damborenea A."/>
            <person name="Ioghen M."/>
            <person name="Bajew S."/>
            <person name="Fernandez-Torron R."/>
            <person name="Toepf A."/>
            <person name="Herrero-Reiriz A."/>
            <person name="Epure D."/>
            <person name="Vill K."/>
            <person name="Hernandez-Lain A."/>
            <person name="Manterola M."/>
            <person name="Azkargorta M."/>
            <person name="Pikatza-Menoio O."/>
            <person name="Perez-Fernandez L."/>
            <person name="Garcia-Puga M."/>
            <person name="Gaina G."/>
            <person name="Bastian A."/>
            <person name="Streata I."/>
            <person name="Walter M.C."/>
            <person name="Mueller-Felber W."/>
            <person name="Thiele S."/>
            <person name="Moragon S."/>
            <person name="Bastida-Lertxundi N."/>
            <person name="Lopez-Cortajarena A."/>
            <person name="Elortza F."/>
            <person name="Gerenu G."/>
            <person name="Alonso-Martin S."/>
            <person name="Straub V."/>
            <person name="de Sancho D."/>
            <person name="Teleanu R."/>
            <person name="Lopez de Munain A."/>
            <person name="Blazquez L."/>
        </authorList>
    </citation>
    <scope>VARIANT LGMDR29 SER-309</scope>
    <scope>INVOLVEMENT IN LGMDR29</scope>
</reference>
<reference key="18">
    <citation type="journal article" date="2024" name="Nat. Commun.">
        <title>SNUPN deficiency causes a recessive muscular dystrophy due to RNA mis-splicing and ECM dysregulation.</title>
        <authorList>
            <consortium name="Undiagnosed Diseases Network"/>
            <person name="Nashabat M."/>
            <person name="Nabavizadeh N."/>
            <person name="Saracoglu H.P."/>
            <person name="Saribas B."/>
            <person name="Avci S."/>
            <person name="Boerklue E."/>
            <person name="Beillard E."/>
            <person name="Yilmaz E."/>
            <person name="Uygur S.E."/>
            <person name="Kayhan C.K."/>
            <person name="Bosco L."/>
            <person name="Eren Z.B."/>
            <person name="Steindl K."/>
            <person name="Richter M.F."/>
            <person name="Bademci G."/>
            <person name="Rauch A."/>
            <person name="Fattahi Z."/>
            <person name="Valentino M.L."/>
            <person name="Connolly A.M."/>
            <person name="Bahr A."/>
            <person name="Viola L."/>
            <person name="Bergmann A.K."/>
            <person name="Rocha M.E."/>
            <person name="Peart L."/>
            <person name="Castro-Rojas D.L."/>
            <person name="Bueltmann E."/>
            <person name="Khan S."/>
            <person name="Giarrana M.L."/>
            <person name="Teleanu R.I."/>
            <person name="Gonzalez J.M."/>
            <person name="Pini A."/>
            <person name="Schaedlich I.S."/>
            <person name="Vill K."/>
            <person name="Brugger M."/>
            <person name="Zuchner S."/>
            <person name="Pinto A."/>
            <person name="Donkervoort S."/>
            <person name="Bivona S.A."/>
            <person name="Riza A."/>
            <person name="Streata I."/>
            <person name="Glaeser D."/>
            <person name="Baquero-Montoya C."/>
            <person name="Garcia-Restrepo N."/>
            <person name="Kotzaeridou U."/>
            <person name="Brunet T."/>
            <person name="Epure D.A."/>
            <person name="Bertoli-Avella A."/>
            <person name="Kariminejad A."/>
            <person name="Tekin M."/>
            <person name="von Hardenberg S."/>
            <person name="Boennemann C.G."/>
            <person name="Stettner G.M."/>
            <person name="Zanni G."/>
            <person name="Kayserili H."/>
            <person name="Oflazer Z.P."/>
            <person name="Escande-Beillard N."/>
        </authorList>
    </citation>
    <scope>VARIANTS LGMDR29 GLN-55; 263-GLN--ASN-360 DEL; 283-SER--ASN-360 DEL; 308-GLN--ASN-360 DEL AND SER-309</scope>
    <scope>CHARACTERIZATION VARIANT LGMDR29 SER-309</scope>
    <scope>INVOLVEMENT IN LGMDR29</scope>
    <scope>FUNCTION</scope>
    <scope>SUBUNIT</scope>
    <scope>SUBCELLULAR LOCATION</scope>
</reference>
<accession>O95149</accession>
<accession>A6NE34</accession>
<accession>A8K0B0</accession>
<accession>D3DW76</accession>
<protein>
    <recommendedName>
        <fullName>Snurportin-1</fullName>
    </recommendedName>
    <alternativeName>
        <fullName>RNA U transporter 1</fullName>
    </alternativeName>
</protein>
<dbReference type="EMBL" id="AF039029">
    <property type="protein sequence ID" value="AAC70906.1"/>
    <property type="molecule type" value="mRNA"/>
</dbReference>
<dbReference type="EMBL" id="CR456811">
    <property type="protein sequence ID" value="CAG33092.1"/>
    <property type="molecule type" value="mRNA"/>
</dbReference>
<dbReference type="EMBL" id="AK289475">
    <property type="protein sequence ID" value="BAF82164.1"/>
    <property type="molecule type" value="mRNA"/>
</dbReference>
<dbReference type="EMBL" id="CH471136">
    <property type="protein sequence ID" value="EAW99245.1"/>
    <property type="molecule type" value="Genomic_DNA"/>
</dbReference>
<dbReference type="EMBL" id="CH471136">
    <property type="protein sequence ID" value="EAW99246.1"/>
    <property type="molecule type" value="Genomic_DNA"/>
</dbReference>
<dbReference type="EMBL" id="BC004203">
    <property type="protein sequence ID" value="AAH04203.1"/>
    <property type="molecule type" value="mRNA"/>
</dbReference>
<dbReference type="CCDS" id="CCDS10281.1"/>
<dbReference type="RefSeq" id="NP_001036046.1">
    <property type="nucleotide sequence ID" value="NM_001042581.2"/>
</dbReference>
<dbReference type="RefSeq" id="NP_001036053.1">
    <property type="nucleotide sequence ID" value="NM_001042588.2"/>
</dbReference>
<dbReference type="RefSeq" id="NP_005692.1">
    <property type="nucleotide sequence ID" value="NM_005701.4"/>
</dbReference>
<dbReference type="PDB" id="1XK5">
    <property type="method" value="X-ray"/>
    <property type="resolution" value="2.40 A"/>
    <property type="chains" value="A=97-300"/>
</dbReference>
<dbReference type="PDB" id="2P8Q">
    <property type="method" value="X-ray"/>
    <property type="resolution" value="2.35 A"/>
    <property type="chains" value="B=25-64"/>
</dbReference>
<dbReference type="PDB" id="2Q5D">
    <property type="method" value="X-ray"/>
    <property type="resolution" value="3.20 A"/>
    <property type="chains" value="C/D=25-64"/>
</dbReference>
<dbReference type="PDB" id="2QNA">
    <property type="method" value="X-ray"/>
    <property type="resolution" value="2.84 A"/>
    <property type="chains" value="B=1-66"/>
</dbReference>
<dbReference type="PDB" id="3GB8">
    <property type="method" value="X-ray"/>
    <property type="resolution" value="2.90 A"/>
    <property type="chains" value="B=1-328"/>
</dbReference>
<dbReference type="PDB" id="3GJX">
    <property type="method" value="X-ray"/>
    <property type="resolution" value="2.50 A"/>
    <property type="chains" value="B/E=1-360"/>
</dbReference>
<dbReference type="PDB" id="3LWW">
    <property type="method" value="X-ray"/>
    <property type="resolution" value="3.15 A"/>
    <property type="chains" value="B/D=25-64"/>
</dbReference>
<dbReference type="PDB" id="3NBY">
    <property type="method" value="X-ray"/>
    <property type="resolution" value="3.42 A"/>
    <property type="chains" value="B/E=15-360"/>
</dbReference>
<dbReference type="PDB" id="3NBZ">
    <property type="method" value="X-ray"/>
    <property type="resolution" value="2.80 A"/>
    <property type="chains" value="B/E=15-360"/>
</dbReference>
<dbReference type="PDB" id="3NC0">
    <property type="method" value="X-ray"/>
    <property type="resolution" value="2.90 A"/>
    <property type="chains" value="B/E=15-360"/>
</dbReference>
<dbReference type="PDB" id="5DIS">
    <property type="method" value="X-ray"/>
    <property type="resolution" value="2.85 A"/>
    <property type="chains" value="C=1-287"/>
</dbReference>
<dbReference type="PDBsum" id="1XK5"/>
<dbReference type="PDBsum" id="2P8Q"/>
<dbReference type="PDBsum" id="2Q5D"/>
<dbReference type="PDBsum" id="2QNA"/>
<dbReference type="PDBsum" id="3GB8"/>
<dbReference type="PDBsum" id="3GJX"/>
<dbReference type="PDBsum" id="3LWW"/>
<dbReference type="PDBsum" id="3NBY"/>
<dbReference type="PDBsum" id="3NBZ"/>
<dbReference type="PDBsum" id="3NC0"/>
<dbReference type="PDBsum" id="5DIS"/>
<dbReference type="SASBDB" id="O95149"/>
<dbReference type="SMR" id="O95149"/>
<dbReference type="BioGRID" id="115384">
    <property type="interactions" value="44"/>
</dbReference>
<dbReference type="ComplexPortal" id="CPX-1032">
    <property type="entry name" value="Importin complex, Snurportin variant"/>
</dbReference>
<dbReference type="CORUM" id="O95149"/>
<dbReference type="DIP" id="DIP-48513N"/>
<dbReference type="ELM" id="O95149"/>
<dbReference type="FunCoup" id="O95149">
    <property type="interactions" value="2254"/>
</dbReference>
<dbReference type="IntAct" id="O95149">
    <property type="interactions" value="35"/>
</dbReference>
<dbReference type="MINT" id="O95149"/>
<dbReference type="STRING" id="9606.ENSP00000454852"/>
<dbReference type="ChEMBL" id="CHEMBL3885569"/>
<dbReference type="GlyCosmos" id="O95149">
    <property type="glycosylation" value="1 site, 1 glycan"/>
</dbReference>
<dbReference type="GlyGen" id="O95149">
    <property type="glycosylation" value="2 sites, 1 O-linked glycan (2 sites)"/>
</dbReference>
<dbReference type="iPTMnet" id="O95149"/>
<dbReference type="PhosphoSitePlus" id="O95149"/>
<dbReference type="BioMuta" id="SNUPN"/>
<dbReference type="jPOST" id="O95149"/>
<dbReference type="MassIVE" id="O95149"/>
<dbReference type="PaxDb" id="9606-ENSP00000454852"/>
<dbReference type="PeptideAtlas" id="O95149"/>
<dbReference type="ProteomicsDB" id="50662"/>
<dbReference type="Pumba" id="O95149"/>
<dbReference type="Antibodypedia" id="27339">
    <property type="antibodies" value="199 antibodies from 26 providers"/>
</dbReference>
<dbReference type="DNASU" id="10073"/>
<dbReference type="Ensembl" id="ENST00000308588.10">
    <property type="protein sequence ID" value="ENSP00000309831.5"/>
    <property type="gene ID" value="ENSG00000169371.14"/>
</dbReference>
<dbReference type="Ensembl" id="ENST00000564644.5">
    <property type="protein sequence ID" value="ENSP00000454852.1"/>
    <property type="gene ID" value="ENSG00000169371.14"/>
</dbReference>
<dbReference type="Ensembl" id="ENST00000564675.5">
    <property type="protein sequence ID" value="ENSP00000458053.1"/>
    <property type="gene ID" value="ENSG00000169371.14"/>
</dbReference>
<dbReference type="Ensembl" id="ENST00000567134.5">
    <property type="protein sequence ID" value="ENSP00000456224.1"/>
    <property type="gene ID" value="ENSG00000169371.14"/>
</dbReference>
<dbReference type="GeneID" id="10073"/>
<dbReference type="KEGG" id="hsa:10073"/>
<dbReference type="MANE-Select" id="ENST00000308588.10">
    <property type="protein sequence ID" value="ENSP00000309831.5"/>
    <property type="RefSeq nucleotide sequence ID" value="NM_005701.4"/>
    <property type="RefSeq protein sequence ID" value="NP_005692.1"/>
</dbReference>
<dbReference type="UCSC" id="uc002ban.4">
    <property type="organism name" value="human"/>
</dbReference>
<dbReference type="AGR" id="HGNC:14245"/>
<dbReference type="CTD" id="10073"/>
<dbReference type="DisGeNET" id="10073"/>
<dbReference type="GeneCards" id="SNUPN"/>
<dbReference type="HGNC" id="HGNC:14245">
    <property type="gene designation" value="SNUPN"/>
</dbReference>
<dbReference type="HPA" id="ENSG00000169371">
    <property type="expression patterns" value="Low tissue specificity"/>
</dbReference>
<dbReference type="MalaCards" id="SNUPN"/>
<dbReference type="MIM" id="607902">
    <property type="type" value="gene"/>
</dbReference>
<dbReference type="MIM" id="620793">
    <property type="type" value="phenotype"/>
</dbReference>
<dbReference type="neXtProt" id="NX_O95149"/>
<dbReference type="OpenTargets" id="ENSG00000169371"/>
<dbReference type="PharmGKB" id="PA34611"/>
<dbReference type="VEuPathDB" id="HostDB:ENSG00000169371"/>
<dbReference type="eggNOG" id="KOG3132">
    <property type="taxonomic scope" value="Eukaryota"/>
</dbReference>
<dbReference type="GeneTree" id="ENSGT00510000047494"/>
<dbReference type="HOGENOM" id="CLU_056809_0_0_1"/>
<dbReference type="InParanoid" id="O95149"/>
<dbReference type="OMA" id="ENWIMVP"/>
<dbReference type="OrthoDB" id="10003593at2759"/>
<dbReference type="PAN-GO" id="O95149">
    <property type="GO annotations" value="0 GO annotations based on evolutionary models"/>
</dbReference>
<dbReference type="PhylomeDB" id="O95149"/>
<dbReference type="TreeFam" id="TF313108"/>
<dbReference type="PathwayCommons" id="O95149"/>
<dbReference type="Reactome" id="R-HSA-191859">
    <property type="pathway name" value="snRNP Assembly"/>
</dbReference>
<dbReference type="SignaLink" id="O95149"/>
<dbReference type="SIGNOR" id="O95149"/>
<dbReference type="BioGRID-ORCS" id="10073">
    <property type="hits" value="717 hits in 1183 CRISPR screens"/>
</dbReference>
<dbReference type="ChiTaRS" id="SNUPN">
    <property type="organism name" value="human"/>
</dbReference>
<dbReference type="EvolutionaryTrace" id="O95149"/>
<dbReference type="GeneWiki" id="SNUPN"/>
<dbReference type="GenomeRNAi" id="10073"/>
<dbReference type="Pharos" id="O95149">
    <property type="development level" value="Tbio"/>
</dbReference>
<dbReference type="PRO" id="PR:O95149"/>
<dbReference type="Proteomes" id="UP000005640">
    <property type="component" value="Chromosome 15"/>
</dbReference>
<dbReference type="RNAct" id="O95149">
    <property type="molecule type" value="protein"/>
</dbReference>
<dbReference type="Bgee" id="ENSG00000169371">
    <property type="expression patterns" value="Expressed in left testis and 108 other cell types or tissues"/>
</dbReference>
<dbReference type="ExpressionAtlas" id="O95149">
    <property type="expression patterns" value="baseline and differential"/>
</dbReference>
<dbReference type="GO" id="GO:0005829">
    <property type="term" value="C:cytosol"/>
    <property type="evidence" value="ECO:0000314"/>
    <property type="project" value="HPA"/>
</dbReference>
<dbReference type="GO" id="GO:0042564">
    <property type="term" value="C:NLS-dependent protein nuclear import complex"/>
    <property type="evidence" value="ECO:0000353"/>
    <property type="project" value="ComplexPortal"/>
</dbReference>
<dbReference type="GO" id="GO:0005643">
    <property type="term" value="C:nuclear pore"/>
    <property type="evidence" value="ECO:0000304"/>
    <property type="project" value="ProtInc"/>
</dbReference>
<dbReference type="GO" id="GO:0005654">
    <property type="term" value="C:nucleoplasm"/>
    <property type="evidence" value="ECO:0000314"/>
    <property type="project" value="HPA"/>
</dbReference>
<dbReference type="GO" id="GO:0005634">
    <property type="term" value="C:nucleus"/>
    <property type="evidence" value="ECO:0000315"/>
    <property type="project" value="UniProtKB"/>
</dbReference>
<dbReference type="GO" id="GO:0005886">
    <property type="term" value="C:plasma membrane"/>
    <property type="evidence" value="ECO:0000314"/>
    <property type="project" value="HPA"/>
</dbReference>
<dbReference type="GO" id="GO:0061608">
    <property type="term" value="F:nuclear import signal receptor activity"/>
    <property type="evidence" value="ECO:0007669"/>
    <property type="project" value="InterPro"/>
</dbReference>
<dbReference type="GO" id="GO:0000339">
    <property type="term" value="F:RNA cap binding"/>
    <property type="evidence" value="ECO:0000304"/>
    <property type="project" value="ProtInc"/>
</dbReference>
<dbReference type="GO" id="GO:0007010">
    <property type="term" value="P:cytoskeleton organization"/>
    <property type="evidence" value="ECO:0000315"/>
    <property type="project" value="UniProtKB"/>
</dbReference>
<dbReference type="GO" id="GO:0051259">
    <property type="term" value="P:protein complex oligomerization"/>
    <property type="evidence" value="ECO:0000315"/>
    <property type="project" value="UniProtKB"/>
</dbReference>
<dbReference type="GO" id="GO:0006606">
    <property type="term" value="P:protein import into nucleus"/>
    <property type="evidence" value="ECO:0007669"/>
    <property type="project" value="InterPro"/>
</dbReference>
<dbReference type="GO" id="GO:0051262">
    <property type="term" value="P:protein tetramerization"/>
    <property type="evidence" value="ECO:0000315"/>
    <property type="project" value="UniProtKB"/>
</dbReference>
<dbReference type="GO" id="GO:0006404">
    <property type="term" value="P:RNA import into nucleus"/>
    <property type="evidence" value="ECO:0000314"/>
    <property type="project" value="ComplexPortal"/>
</dbReference>
<dbReference type="GO" id="GO:0061015">
    <property type="term" value="P:snRNA import into nucleus"/>
    <property type="evidence" value="ECO:0007669"/>
    <property type="project" value="InterPro"/>
</dbReference>
<dbReference type="CDD" id="cd09232">
    <property type="entry name" value="Snurportin-1_C"/>
    <property type="match status" value="1"/>
</dbReference>
<dbReference type="DisProt" id="DP01874"/>
<dbReference type="FunFam" id="3.30.470.30:FF:000010">
    <property type="entry name" value="Snurportin-1"/>
    <property type="match status" value="1"/>
</dbReference>
<dbReference type="Gene3D" id="3.30.470.30">
    <property type="entry name" value="DNA ligase/mRNA capping enzyme"/>
    <property type="match status" value="1"/>
</dbReference>
<dbReference type="IDEAL" id="IID00115"/>
<dbReference type="InterPro" id="IPR002652">
    <property type="entry name" value="Importin-a_IBB"/>
</dbReference>
<dbReference type="InterPro" id="IPR017336">
    <property type="entry name" value="Snurportin-1"/>
</dbReference>
<dbReference type="InterPro" id="IPR024721">
    <property type="entry name" value="Snurportin-1_N"/>
</dbReference>
<dbReference type="InterPro" id="IPR047857">
    <property type="entry name" value="Snurportin1_C"/>
</dbReference>
<dbReference type="PANTHER" id="PTHR13403:SF6">
    <property type="entry name" value="SNURPORTIN-1"/>
    <property type="match status" value="1"/>
</dbReference>
<dbReference type="PANTHER" id="PTHR13403">
    <property type="entry name" value="SNURPORTIN1 RNUT1 PROTEIN RNA, U TRANSPORTER 1"/>
    <property type="match status" value="1"/>
</dbReference>
<dbReference type="Pfam" id="PF11538">
    <property type="entry name" value="Snurportin1"/>
    <property type="match status" value="1"/>
</dbReference>
<dbReference type="Pfam" id="PF21974">
    <property type="entry name" value="SPN1_m3Gcap_bd"/>
    <property type="match status" value="1"/>
</dbReference>
<dbReference type="PIRSF" id="PIRSF037955">
    <property type="entry name" value="Snurportin-1"/>
    <property type="match status" value="1"/>
</dbReference>
<dbReference type="SUPFAM" id="SSF56091">
    <property type="entry name" value="DNA ligase/mRNA capping enzyme, catalytic domain"/>
    <property type="match status" value="1"/>
</dbReference>
<dbReference type="PROSITE" id="PS51214">
    <property type="entry name" value="IBB"/>
    <property type="match status" value="1"/>
</dbReference>
<feature type="chain" id="PRO_0000191071" description="Snurportin-1">
    <location>
        <begin position="1"/>
        <end position="360"/>
    </location>
</feature>
<feature type="domain" description="IBB" evidence="1">
    <location>
        <begin position="11"/>
        <end position="73"/>
    </location>
</feature>
<feature type="region of interest" description="Necessary for interaction with XPO1" evidence="3">
    <location>
        <begin position="1"/>
        <end position="159"/>
    </location>
</feature>
<feature type="region of interest" description="Necessary for interaction with KPNB1 and m3G-cap U1 and U5 snRNP import receptor activity" evidence="7 11">
    <location>
        <begin position="1"/>
        <end position="65"/>
    </location>
</feature>
<feature type="region of interest" description="Disordered" evidence="2">
    <location>
        <begin position="1"/>
        <end position="42"/>
    </location>
</feature>
<feature type="region of interest" description="Interaction with m3G-cap structure" evidence="5 14">
    <location>
        <begin position="127"/>
        <end position="129"/>
    </location>
</feature>
<feature type="region of interest" description="Necessary for binding to the m3G-cap structure" evidence="11">
    <location>
        <begin position="208"/>
        <end position="328"/>
    </location>
</feature>
<feature type="region of interest" description="Disordered" evidence="2">
    <location>
        <begin position="339"/>
        <end position="360"/>
    </location>
</feature>
<feature type="compositionally biased region" description="Polar residues" evidence="2">
    <location>
        <begin position="7"/>
        <end position="22"/>
    </location>
</feature>
<feature type="site" description="Interaction with m3G-cap structure" evidence="5 14">
    <location>
        <position position="105"/>
    </location>
</feature>
<feature type="site" description="Interaction with m3G-cap structure" evidence="5 14">
    <location>
        <position position="144"/>
    </location>
</feature>
<feature type="site" description="Interaction with m3G-cap structure" evidence="5 14">
    <location>
        <position position="276"/>
    </location>
</feature>
<feature type="modified residue" description="N-acetylmethionine" evidence="15">
    <location>
        <position position="1"/>
    </location>
</feature>
<feature type="modified residue" description="Phosphoserine" evidence="16">
    <location>
        <position position="75"/>
    </location>
</feature>
<feature type="modified residue" description="Phosphoserine" evidence="17">
    <location>
        <position position="350"/>
    </location>
</feature>
<feature type="sequence variant" id="VAR_089940" description="In LGMDR29; uncertain significance." evidence="10">
    <original>R</original>
    <variation>Q</variation>
    <location>
        <position position="55"/>
    </location>
</feature>
<feature type="sequence variant" id="VAR_089941" description="In LGMDR29; likely pathogenic." evidence="10">
    <location>
        <begin position="263"/>
        <end position="360"/>
    </location>
</feature>
<feature type="sequence variant" id="VAR_089942" description="In LGMDR29; likely pathogenic." evidence="10">
    <location>
        <begin position="283"/>
        <end position="360"/>
    </location>
</feature>
<feature type="sequence variant" id="VAR_089943" description="In LGMDR29; uncertain significance." evidence="10">
    <location>
        <begin position="308"/>
        <end position="360"/>
    </location>
</feature>
<feature type="sequence variant" id="VAR_089944" description="In LGMDR29; likely pathogenic; increased protein aggregation in homozygous patient cells." evidence="9 10">
    <original>I</original>
    <variation>S</variation>
    <location>
        <position position="309"/>
    </location>
</feature>
<feature type="mutagenesis site" description="Abolishes interaction with KPNB1 and m3G-cap U1 snRNP import receptor activity." evidence="6">
    <original>R</original>
    <variation>A</variation>
    <location>
        <position position="27"/>
    </location>
</feature>
<feature type="mutagenesis site" description="Reduces binding to m3G-cap structure, interaction with XPO1 and snRNP import receptor activity." evidence="5 6">
    <original>W</original>
    <variation>A</variation>
    <location>
        <position position="107"/>
    </location>
</feature>
<feature type="mutagenesis site" description="Reduces binding to m3G-cap structure." evidence="6">
    <original>FRFYW</original>
    <variation>A</variation>
    <location>
        <begin position="203"/>
        <end position="207"/>
    </location>
</feature>
<feature type="mutagenesis site" description="Reduces binding to m3G-cap structure, interaction with XPO1 and snRNP import receptor activity." evidence="5 6">
    <original>W</original>
    <variation>A</variation>
    <location>
        <position position="276"/>
    </location>
</feature>
<feature type="helix" evidence="20">
    <location>
        <begin position="1"/>
        <end position="10"/>
    </location>
</feature>
<feature type="strand" evidence="21">
    <location>
        <begin position="21"/>
        <end position="23"/>
    </location>
</feature>
<feature type="helix" evidence="19">
    <location>
        <begin position="28"/>
        <end position="30"/>
    </location>
</feature>
<feature type="helix" evidence="19">
    <location>
        <begin position="42"/>
        <end position="60"/>
    </location>
</feature>
<feature type="turn" evidence="19">
    <location>
        <begin position="61"/>
        <end position="63"/>
    </location>
</feature>
<feature type="strand" evidence="20">
    <location>
        <begin position="97"/>
        <end position="100"/>
    </location>
</feature>
<feature type="strand" evidence="18">
    <location>
        <begin position="102"/>
        <end position="107"/>
    </location>
</feature>
<feature type="helix" evidence="18">
    <location>
        <begin position="115"/>
        <end position="118"/>
    </location>
</feature>
<feature type="strand" evidence="18">
    <location>
        <begin position="119"/>
        <end position="135"/>
    </location>
</feature>
<feature type="strand" evidence="18">
    <location>
        <begin position="138"/>
        <end position="142"/>
    </location>
</feature>
<feature type="strand" evidence="21">
    <location>
        <begin position="144"/>
        <end position="146"/>
    </location>
</feature>
<feature type="strand" evidence="18">
    <location>
        <begin position="148"/>
        <end position="152"/>
    </location>
</feature>
<feature type="strand" evidence="18">
    <location>
        <begin position="155"/>
        <end position="159"/>
    </location>
</feature>
<feature type="strand" evidence="18">
    <location>
        <begin position="161"/>
        <end position="163"/>
    </location>
</feature>
<feature type="strand" evidence="22">
    <location>
        <begin position="165"/>
        <end position="167"/>
    </location>
</feature>
<feature type="strand" evidence="18">
    <location>
        <begin position="170"/>
        <end position="177"/>
    </location>
</feature>
<feature type="helix" evidence="18">
    <location>
        <begin position="178"/>
        <end position="180"/>
    </location>
</feature>
<feature type="strand" evidence="18">
    <location>
        <begin position="182"/>
        <end position="191"/>
    </location>
</feature>
<feature type="strand" evidence="23">
    <location>
        <begin position="197"/>
        <end position="199"/>
    </location>
</feature>
<feature type="helix" evidence="18">
    <location>
        <begin position="201"/>
        <end position="211"/>
    </location>
</feature>
<feature type="turn" evidence="18">
    <location>
        <begin position="212"/>
        <end position="214"/>
    </location>
</feature>
<feature type="turn" evidence="18">
    <location>
        <begin position="216"/>
        <end position="219"/>
    </location>
</feature>
<feature type="strand" evidence="18">
    <location>
        <begin position="225"/>
        <end position="231"/>
    </location>
</feature>
<feature type="strand" evidence="18">
    <location>
        <begin position="234"/>
        <end position="236"/>
    </location>
</feature>
<feature type="helix" evidence="18">
    <location>
        <begin position="239"/>
        <end position="246"/>
    </location>
</feature>
<feature type="strand" evidence="18">
    <location>
        <begin position="254"/>
        <end position="263"/>
    </location>
</feature>
<feature type="strand" evidence="18">
    <location>
        <begin position="268"/>
        <end position="277"/>
    </location>
</feature>
<feature type="helix" evidence="18">
    <location>
        <begin position="279"/>
        <end position="281"/>
    </location>
</feature>
<feature type="helix" evidence="18">
    <location>
        <begin position="282"/>
        <end position="286"/>
    </location>
</feature>
<feature type="strand" evidence="22">
    <location>
        <begin position="291"/>
        <end position="293"/>
    </location>
</feature>
<feature type="helix" evidence="18">
    <location>
        <begin position="294"/>
        <end position="296"/>
    </location>
</feature>
<keyword id="KW-0002">3D-structure</keyword>
<keyword id="KW-0007">Acetylation</keyword>
<keyword id="KW-0963">Cytoplasm</keyword>
<keyword id="KW-0903">Direct protein sequencing</keyword>
<keyword id="KW-0225">Disease variant</keyword>
<keyword id="KW-0947">Limb-girdle muscular dystrophy</keyword>
<keyword id="KW-0539">Nucleus</keyword>
<keyword id="KW-0597">Phosphoprotein</keyword>
<keyword id="KW-1267">Proteomics identification</keyword>
<keyword id="KW-1185">Reference proteome</keyword>
<keyword id="KW-0694">RNA-binding</keyword>
<keyword id="KW-0813">Transport</keyword>